<dbReference type="EMBL" id="BC122230">
    <property type="protein sequence ID" value="AAI22231.1"/>
    <property type="status" value="ALT_INIT"/>
    <property type="molecule type" value="mRNA"/>
</dbReference>
<dbReference type="EMBL" id="BC129363">
    <property type="protein sequence ID" value="AAI29364.1"/>
    <property type="molecule type" value="mRNA"/>
</dbReference>
<dbReference type="RefSeq" id="NP_001073667.1">
    <property type="nucleotide sequence ID" value="NM_001080198.2"/>
</dbReference>
<dbReference type="RefSeq" id="XP_017213931.1">
    <property type="nucleotide sequence ID" value="XM_017358442.1"/>
</dbReference>
<dbReference type="PDB" id="4QKW">
    <property type="method" value="X-ray"/>
    <property type="resolution" value="1.70 A"/>
    <property type="chains" value="A/B/C=16-123"/>
</dbReference>
<dbReference type="PDBsum" id="4QKW"/>
<dbReference type="SMR" id="A1L260"/>
<dbReference type="BioGRID" id="95761">
    <property type="interactions" value="21"/>
</dbReference>
<dbReference type="FunCoup" id="A1L260">
    <property type="interactions" value="918"/>
</dbReference>
<dbReference type="STRING" id="7955.ENSDARP00000121336"/>
<dbReference type="iPTMnet" id="A1L260"/>
<dbReference type="PaxDb" id="7955-ENSDARP00000121336"/>
<dbReference type="PeptideAtlas" id="A1L260"/>
<dbReference type="GeneID" id="552940"/>
<dbReference type="KEGG" id="dre:552940"/>
<dbReference type="AGR" id="ZFIN:ZDB-GENE-050506-21"/>
<dbReference type="CTD" id="552940"/>
<dbReference type="ZFIN" id="ZDB-GENE-050506-21">
    <property type="gene designation" value="cavin4a"/>
</dbReference>
<dbReference type="eggNOG" id="ENOG502QQ9A">
    <property type="taxonomic scope" value="Eukaryota"/>
</dbReference>
<dbReference type="InParanoid" id="A1L260"/>
<dbReference type="OrthoDB" id="8924144at2759"/>
<dbReference type="PhylomeDB" id="A1L260"/>
<dbReference type="EvolutionaryTrace" id="A1L260"/>
<dbReference type="PRO" id="PR:A1L260"/>
<dbReference type="Proteomes" id="UP000000437">
    <property type="component" value="Chromosome 2"/>
</dbReference>
<dbReference type="GO" id="GO:0005901">
    <property type="term" value="C:caveola"/>
    <property type="evidence" value="ECO:0000250"/>
    <property type="project" value="UniProtKB"/>
</dbReference>
<dbReference type="GO" id="GO:0005737">
    <property type="term" value="C:cytoplasm"/>
    <property type="evidence" value="ECO:0000318"/>
    <property type="project" value="GO_Central"/>
</dbReference>
<dbReference type="GO" id="GO:0005886">
    <property type="term" value="C:plasma membrane"/>
    <property type="evidence" value="ECO:0000250"/>
    <property type="project" value="UniProtKB"/>
</dbReference>
<dbReference type="GO" id="GO:0030017">
    <property type="term" value="C:sarcomere"/>
    <property type="evidence" value="ECO:0007669"/>
    <property type="project" value="UniProtKB-SubCell"/>
</dbReference>
<dbReference type="GO" id="GO:0007517">
    <property type="term" value="P:muscle organ development"/>
    <property type="evidence" value="ECO:0007669"/>
    <property type="project" value="UniProtKB-KW"/>
</dbReference>
<dbReference type="GO" id="GO:0010468">
    <property type="term" value="P:regulation of gene expression"/>
    <property type="evidence" value="ECO:0000318"/>
    <property type="project" value="GO_Central"/>
</dbReference>
<dbReference type="GO" id="GO:0033292">
    <property type="term" value="P:T-tubule organization"/>
    <property type="evidence" value="ECO:0000315"/>
    <property type="project" value="ZFIN"/>
</dbReference>
<dbReference type="InterPro" id="IPR026752">
    <property type="entry name" value="Cavin_fam"/>
</dbReference>
<dbReference type="PANTHER" id="PTHR15240:SF4">
    <property type="entry name" value="CAVEOLAE-ASSOCIATED PROTEIN 4"/>
    <property type="match status" value="1"/>
</dbReference>
<dbReference type="PANTHER" id="PTHR15240">
    <property type="entry name" value="CAVIN"/>
    <property type="match status" value="1"/>
</dbReference>
<dbReference type="Pfam" id="PF15237">
    <property type="entry name" value="PTRF_SDPR"/>
    <property type="match status" value="1"/>
</dbReference>
<gene>
    <name type="primary">cavin4a</name>
    <name type="synonym">murca</name>
    <name type="ORF">zgc:158664</name>
</gene>
<accession>A1L260</accession>
<accession>Q0P480</accession>
<evidence type="ECO:0000250" key="1">
    <source>
        <dbReference type="UniProtKB" id="A2AMM0"/>
    </source>
</evidence>
<evidence type="ECO:0000255" key="2"/>
<evidence type="ECO:0000256" key="3">
    <source>
        <dbReference type="SAM" id="MobiDB-lite"/>
    </source>
</evidence>
<evidence type="ECO:0000269" key="4">
    <source>
    </source>
</evidence>
<evidence type="ECO:0000305" key="5"/>
<evidence type="ECO:0007829" key="6">
    <source>
        <dbReference type="PDB" id="4QKW"/>
    </source>
</evidence>
<comment type="function">
    <text evidence="1">Induces rhoa activation and activates nppa transcription and myofibrillar organization through the rho/rock signaling pathway.</text>
</comment>
<comment type="subcellular location">
    <subcellularLocation>
        <location evidence="1">Cytoplasm</location>
        <location evidence="1">Myofibril</location>
        <location evidence="1">Sarcomere</location>
    </subcellularLocation>
    <subcellularLocation>
        <location evidence="1">Cytoplasm</location>
    </subcellularLocation>
    <subcellularLocation>
        <location evidence="1">Membrane</location>
        <location evidence="1">Caveola</location>
    </subcellularLocation>
    <text evidence="1">Localizes in the caveolae in a caveolin-dependent manner.</text>
</comment>
<comment type="similarity">
    <text evidence="5">Belongs to the CAVIN family.</text>
</comment>
<comment type="sequence caution" evidence="5">
    <conflict type="erroneous initiation">
        <sequence resource="EMBL-CDS" id="AAI22231"/>
    </conflict>
</comment>
<organism>
    <name type="scientific">Danio rerio</name>
    <name type="common">Zebrafish</name>
    <name type="synonym">Brachydanio rerio</name>
    <dbReference type="NCBI Taxonomy" id="7955"/>
    <lineage>
        <taxon>Eukaryota</taxon>
        <taxon>Metazoa</taxon>
        <taxon>Chordata</taxon>
        <taxon>Craniata</taxon>
        <taxon>Vertebrata</taxon>
        <taxon>Euteleostomi</taxon>
        <taxon>Actinopterygii</taxon>
        <taxon>Neopterygii</taxon>
        <taxon>Teleostei</taxon>
        <taxon>Ostariophysi</taxon>
        <taxon>Cypriniformes</taxon>
        <taxon>Danionidae</taxon>
        <taxon>Danioninae</taxon>
        <taxon>Danio</taxon>
    </lineage>
</organism>
<feature type="chain" id="PRO_0000325765" description="Caveolae-associated protein 4a">
    <location>
        <begin position="1"/>
        <end position="329"/>
    </location>
</feature>
<feature type="region of interest" description="Disordered" evidence="3">
    <location>
        <begin position="198"/>
        <end position="260"/>
    </location>
</feature>
<feature type="region of interest" description="Disordered" evidence="3">
    <location>
        <begin position="274"/>
        <end position="329"/>
    </location>
</feature>
<feature type="coiled-coil region" evidence="2">
    <location>
        <begin position="198"/>
        <end position="262"/>
    </location>
</feature>
<feature type="compositionally biased region" description="Basic and acidic residues" evidence="3">
    <location>
        <begin position="201"/>
        <end position="220"/>
    </location>
</feature>
<feature type="compositionally biased region" description="Polar residues" evidence="3">
    <location>
        <begin position="221"/>
        <end position="232"/>
    </location>
</feature>
<feature type="compositionally biased region" description="Basic and acidic residues" evidence="3">
    <location>
        <begin position="242"/>
        <end position="260"/>
    </location>
</feature>
<feature type="compositionally biased region" description="Low complexity" evidence="3">
    <location>
        <begin position="279"/>
        <end position="290"/>
    </location>
</feature>
<feature type="compositionally biased region" description="Basic and acidic residues" evidence="3">
    <location>
        <begin position="310"/>
        <end position="329"/>
    </location>
</feature>
<feature type="modified residue" description="Phosphothreonine" evidence="4">
    <location>
        <position position="292"/>
    </location>
</feature>
<feature type="sequence conflict" description="In Ref. 1; AAI22231." evidence="5" ref="1">
    <original>S</original>
    <variation>P</variation>
    <location>
        <position position="23"/>
    </location>
</feature>
<feature type="sequence conflict" description="In Ref. 1; AAI22231." evidence="5" ref="1">
    <original>G</original>
    <variation>A</variation>
    <location>
        <position position="54"/>
    </location>
</feature>
<feature type="sequence conflict" description="In Ref. 1; AAI22231." evidence="5" ref="1">
    <original>E</original>
    <variation>K</variation>
    <location>
        <position position="320"/>
    </location>
</feature>
<feature type="helix" evidence="6">
    <location>
        <begin position="21"/>
        <end position="117"/>
    </location>
</feature>
<protein>
    <recommendedName>
        <fullName>Caveolae-associated protein 4a</fullName>
    </recommendedName>
    <alternativeName>
        <fullName>Muscle-related coiled-coil protein a</fullName>
    </alternativeName>
    <alternativeName>
        <fullName>Muscle-restricted coiled-coil protein</fullName>
    </alternativeName>
</protein>
<sequence length="329" mass="36534">MEKRGDVILGVEDESGQPVSALSILSLLERVSTIIDGVQASQQRMEERQQQLEGSVSAVQSELLKLARDHGATATTVDKLLQKARRVSTHVKEVRSRVEKQNVRVKKVETTQDELLTRNKFRVVIYQGEKEVPSVAVTKTPKGAGLAELEVEPDEYDIPADLSSDEEYMVVEDAESSRGARLKQSGLKGIENIKAAFSKENMNKTREKTRENLSKTKESLSKTGQTLGTKFNTLGEKIVPPEQREKIKQSSERLKENIAKKAPTKESFKIKLKKERTVAEGQEGAEAEPAVTPPKGRKSSPDVTYTEVVTENKREGPVSEEGATRIHED</sequence>
<keyword id="KW-0002">3D-structure</keyword>
<keyword id="KW-0010">Activator</keyword>
<keyword id="KW-0175">Coiled coil</keyword>
<keyword id="KW-0963">Cytoplasm</keyword>
<keyword id="KW-0217">Developmental protein</keyword>
<keyword id="KW-0221">Differentiation</keyword>
<keyword id="KW-0472">Membrane</keyword>
<keyword id="KW-0517">Myogenesis</keyword>
<keyword id="KW-0597">Phosphoprotein</keyword>
<keyword id="KW-1185">Reference proteome</keyword>
<keyword id="KW-0804">Transcription</keyword>
<keyword id="KW-0805">Transcription regulation</keyword>
<reference key="1">
    <citation type="submission" date="2006-12" db="EMBL/GenBank/DDBJ databases">
        <authorList>
            <consortium name="NIH - Zebrafish Gene Collection (ZGC) project"/>
        </authorList>
    </citation>
    <scope>NUCLEOTIDE SEQUENCE [LARGE SCALE MRNA]</scope>
    <source>
        <tissue>Larva</tissue>
    </source>
</reference>
<reference key="2">
    <citation type="journal article" date="2008" name="J. Proteome Res.">
        <title>Online automated in vivo zebrafish phosphoproteomics: from large-scale analysis down to a single embryo.</title>
        <authorList>
            <person name="Lemeer S."/>
            <person name="Pinkse M.W.H."/>
            <person name="Mohammed S."/>
            <person name="van Breukelen B."/>
            <person name="den Hertog J."/>
            <person name="Slijper M."/>
            <person name="Heck A.J.R."/>
        </authorList>
    </citation>
    <scope>PHOSPHORYLATION [LARGE SCALE ANALYSIS] AT THR-292</scope>
    <scope>IDENTIFICATION BY MASS SPECTROMETRY</scope>
    <source>
        <tissue>Embryo</tissue>
    </source>
</reference>
<name>CVN4A_DANRE</name>
<proteinExistence type="evidence at protein level"/>